<gene>
    <name type="primary">HMGN2P46</name>
    <name type="synonym">C15orf21</name>
</gene>
<accession>Q86SG4</accession>
<accession>Q495B5</accession>
<accession>Q86SH8</accession>
<accession>Q8N8I5</accession>
<feature type="chain" id="PRO_0000079990" description="Putative Dresden prostate carcinoma protein 2">
    <location>
        <begin position="1"/>
        <end position="172"/>
    </location>
</feature>
<feature type="region of interest" description="Disordered" evidence="1">
    <location>
        <begin position="40"/>
        <end position="61"/>
    </location>
</feature>
<feature type="splice variant" id="VSP_014624" description="In isoform 3." evidence="4">
    <location>
        <begin position="1"/>
        <end position="22"/>
    </location>
</feature>
<feature type="splice variant" id="VSP_014625" description="In isoform 2." evidence="3">
    <original>MEPWAMRALDFA</original>
    <variation>MKE</variation>
    <location>
        <begin position="1"/>
        <end position="12"/>
    </location>
</feature>
<feature type="sequence variant" id="VAR_022865" description="In dbSNP:rs8042811.">
    <original>C</original>
    <variation>R</variation>
    <location>
        <position position="91"/>
    </location>
</feature>
<reference key="1">
    <citation type="journal article" date="2004" name="Int. J. Cancer">
        <title>D-PCa-2: a novel transcript highly overexpressed in human prostate and prostate cancer.</title>
        <authorList>
            <person name="Weigle B."/>
            <person name="Kiessling A."/>
            <person name="Ebner R."/>
            <person name="Fuessel S."/>
            <person name="Temme A."/>
            <person name="Meye A."/>
            <person name="Schmitz M."/>
            <person name="Rieger M.A."/>
            <person name="Ockert D."/>
            <person name="Wirth M.P."/>
            <person name="Rieber E.P."/>
        </authorList>
    </citation>
    <scope>NUCLEOTIDE SEQUENCE [MRNA] (ISOFORMS 1 AND 3)</scope>
    <scope>TISSUE SPECIFICITY</scope>
    <source>
        <tissue>Prostate</tissue>
    </source>
</reference>
<reference key="2">
    <citation type="journal article" date="2004" name="Nat. Genet.">
        <title>Complete sequencing and characterization of 21,243 full-length human cDNAs.</title>
        <authorList>
            <person name="Ota T."/>
            <person name="Suzuki Y."/>
            <person name="Nishikawa T."/>
            <person name="Otsuki T."/>
            <person name="Sugiyama T."/>
            <person name="Irie R."/>
            <person name="Wakamatsu A."/>
            <person name="Hayashi K."/>
            <person name="Sato H."/>
            <person name="Nagai K."/>
            <person name="Kimura K."/>
            <person name="Makita H."/>
            <person name="Sekine M."/>
            <person name="Obayashi M."/>
            <person name="Nishi T."/>
            <person name="Shibahara T."/>
            <person name="Tanaka T."/>
            <person name="Ishii S."/>
            <person name="Yamamoto J."/>
            <person name="Saito K."/>
            <person name="Kawai Y."/>
            <person name="Isono Y."/>
            <person name="Nakamura Y."/>
            <person name="Nagahari K."/>
            <person name="Murakami K."/>
            <person name="Yasuda T."/>
            <person name="Iwayanagi T."/>
            <person name="Wagatsuma M."/>
            <person name="Shiratori A."/>
            <person name="Sudo H."/>
            <person name="Hosoiri T."/>
            <person name="Kaku Y."/>
            <person name="Kodaira H."/>
            <person name="Kondo H."/>
            <person name="Sugawara M."/>
            <person name="Takahashi M."/>
            <person name="Kanda K."/>
            <person name="Yokoi T."/>
            <person name="Furuya T."/>
            <person name="Kikkawa E."/>
            <person name="Omura Y."/>
            <person name="Abe K."/>
            <person name="Kamihara K."/>
            <person name="Katsuta N."/>
            <person name="Sato K."/>
            <person name="Tanikawa M."/>
            <person name="Yamazaki M."/>
            <person name="Ninomiya K."/>
            <person name="Ishibashi T."/>
            <person name="Yamashita H."/>
            <person name="Murakawa K."/>
            <person name="Fujimori K."/>
            <person name="Tanai H."/>
            <person name="Kimata M."/>
            <person name="Watanabe M."/>
            <person name="Hiraoka S."/>
            <person name="Chiba Y."/>
            <person name="Ishida S."/>
            <person name="Ono Y."/>
            <person name="Takiguchi S."/>
            <person name="Watanabe S."/>
            <person name="Yosida M."/>
            <person name="Hotuta T."/>
            <person name="Kusano J."/>
            <person name="Kanehori K."/>
            <person name="Takahashi-Fujii A."/>
            <person name="Hara H."/>
            <person name="Tanase T.-O."/>
            <person name="Nomura Y."/>
            <person name="Togiya S."/>
            <person name="Komai F."/>
            <person name="Hara R."/>
            <person name="Takeuchi K."/>
            <person name="Arita M."/>
            <person name="Imose N."/>
            <person name="Musashino K."/>
            <person name="Yuuki H."/>
            <person name="Oshima A."/>
            <person name="Sasaki N."/>
            <person name="Aotsuka S."/>
            <person name="Yoshikawa Y."/>
            <person name="Matsunawa H."/>
            <person name="Ichihara T."/>
            <person name="Shiohata N."/>
            <person name="Sano S."/>
            <person name="Moriya S."/>
            <person name="Momiyama H."/>
            <person name="Satoh N."/>
            <person name="Takami S."/>
            <person name="Terashima Y."/>
            <person name="Suzuki O."/>
            <person name="Nakagawa S."/>
            <person name="Senoh A."/>
            <person name="Mizoguchi H."/>
            <person name="Goto Y."/>
            <person name="Shimizu F."/>
            <person name="Wakebe H."/>
            <person name="Hishigaki H."/>
            <person name="Watanabe T."/>
            <person name="Sugiyama A."/>
            <person name="Takemoto M."/>
            <person name="Kawakami B."/>
            <person name="Yamazaki M."/>
            <person name="Watanabe K."/>
            <person name="Kumagai A."/>
            <person name="Itakura S."/>
            <person name="Fukuzumi Y."/>
            <person name="Fujimori Y."/>
            <person name="Komiyama M."/>
            <person name="Tashiro H."/>
            <person name="Tanigami A."/>
            <person name="Fujiwara T."/>
            <person name="Ono T."/>
            <person name="Yamada K."/>
            <person name="Fujii Y."/>
            <person name="Ozaki K."/>
            <person name="Hirao M."/>
            <person name="Ohmori Y."/>
            <person name="Kawabata A."/>
            <person name="Hikiji T."/>
            <person name="Kobatake N."/>
            <person name="Inagaki H."/>
            <person name="Ikema Y."/>
            <person name="Okamoto S."/>
            <person name="Okitani R."/>
            <person name="Kawakami T."/>
            <person name="Noguchi S."/>
            <person name="Itoh T."/>
            <person name="Shigeta K."/>
            <person name="Senba T."/>
            <person name="Matsumura K."/>
            <person name="Nakajima Y."/>
            <person name="Mizuno T."/>
            <person name="Morinaga M."/>
            <person name="Sasaki M."/>
            <person name="Togashi T."/>
            <person name="Oyama M."/>
            <person name="Hata H."/>
            <person name="Watanabe M."/>
            <person name="Komatsu T."/>
            <person name="Mizushima-Sugano J."/>
            <person name="Satoh T."/>
            <person name="Shirai Y."/>
            <person name="Takahashi Y."/>
            <person name="Nakagawa K."/>
            <person name="Okumura K."/>
            <person name="Nagase T."/>
            <person name="Nomura N."/>
            <person name="Kikuchi H."/>
            <person name="Masuho Y."/>
            <person name="Yamashita R."/>
            <person name="Nakai K."/>
            <person name="Yada T."/>
            <person name="Nakamura Y."/>
            <person name="Ohara O."/>
            <person name="Isogai T."/>
            <person name="Sugano S."/>
        </authorList>
    </citation>
    <scope>NUCLEOTIDE SEQUENCE [LARGE SCALE MRNA] (ISOFORM 2)</scope>
    <source>
        <tissue>Prostate</tissue>
    </source>
</reference>
<reference key="3">
    <citation type="journal article" date="2006" name="Nature">
        <title>Analysis of the DNA sequence and duplication history of human chromosome 15.</title>
        <authorList>
            <person name="Zody M.C."/>
            <person name="Garber M."/>
            <person name="Sharpe T."/>
            <person name="Young S.K."/>
            <person name="Rowen L."/>
            <person name="O'Neill K."/>
            <person name="Whittaker C.A."/>
            <person name="Kamal M."/>
            <person name="Chang J.L."/>
            <person name="Cuomo C.A."/>
            <person name="Dewar K."/>
            <person name="FitzGerald M.G."/>
            <person name="Kodira C.D."/>
            <person name="Madan A."/>
            <person name="Qin S."/>
            <person name="Yang X."/>
            <person name="Abbasi N."/>
            <person name="Abouelleil A."/>
            <person name="Arachchi H.M."/>
            <person name="Baradarani L."/>
            <person name="Birditt B."/>
            <person name="Bloom S."/>
            <person name="Bloom T."/>
            <person name="Borowsky M.L."/>
            <person name="Burke J."/>
            <person name="Butler J."/>
            <person name="Cook A."/>
            <person name="DeArellano K."/>
            <person name="DeCaprio D."/>
            <person name="Dorris L. III"/>
            <person name="Dors M."/>
            <person name="Eichler E.E."/>
            <person name="Engels R."/>
            <person name="Fahey J."/>
            <person name="Fleetwood P."/>
            <person name="Friedman C."/>
            <person name="Gearin G."/>
            <person name="Hall J.L."/>
            <person name="Hensley G."/>
            <person name="Johnson E."/>
            <person name="Jones C."/>
            <person name="Kamat A."/>
            <person name="Kaur A."/>
            <person name="Locke D.P."/>
            <person name="Madan A."/>
            <person name="Munson G."/>
            <person name="Jaffe D.B."/>
            <person name="Lui A."/>
            <person name="Macdonald P."/>
            <person name="Mauceli E."/>
            <person name="Naylor J.W."/>
            <person name="Nesbitt R."/>
            <person name="Nicol R."/>
            <person name="O'Leary S.B."/>
            <person name="Ratcliffe A."/>
            <person name="Rounsley S."/>
            <person name="She X."/>
            <person name="Sneddon K.M.B."/>
            <person name="Stewart S."/>
            <person name="Sougnez C."/>
            <person name="Stone S.M."/>
            <person name="Topham K."/>
            <person name="Vincent D."/>
            <person name="Wang S."/>
            <person name="Zimmer A.R."/>
            <person name="Birren B.W."/>
            <person name="Hood L."/>
            <person name="Lander E.S."/>
            <person name="Nusbaum C."/>
        </authorList>
    </citation>
    <scope>NUCLEOTIDE SEQUENCE [LARGE SCALE GENOMIC DNA]</scope>
</reference>
<evidence type="ECO:0000256" key="1">
    <source>
        <dbReference type="SAM" id="MobiDB-lite"/>
    </source>
</evidence>
<evidence type="ECO:0000269" key="2">
    <source>
    </source>
</evidence>
<evidence type="ECO:0000303" key="3">
    <source>
    </source>
</evidence>
<evidence type="ECO:0000303" key="4">
    <source>
    </source>
</evidence>
<evidence type="ECO:0000305" key="5"/>
<sequence length="172" mass="20403">MEPWAMRALDFADESGSVSCKDMHLLLWLQKRIEMHKAEQCEEEEAMTPRPTKARAPLPSAYVPPLSLPPCPRERLKGMLKEIKPRLSRNCREDPQGCLLNLLLQSHSRSPERPLQRRERRYLQRRREKLMLARRGITLQKMEMPKQTRHRKLKVLEMPSEVCAFLITVYFW</sequence>
<organism>
    <name type="scientific">Homo sapiens</name>
    <name type="common">Human</name>
    <dbReference type="NCBI Taxonomy" id="9606"/>
    <lineage>
        <taxon>Eukaryota</taxon>
        <taxon>Metazoa</taxon>
        <taxon>Chordata</taxon>
        <taxon>Craniata</taxon>
        <taxon>Vertebrata</taxon>
        <taxon>Euteleostomi</taxon>
        <taxon>Mammalia</taxon>
        <taxon>Eutheria</taxon>
        <taxon>Euarchontoglires</taxon>
        <taxon>Primates</taxon>
        <taxon>Haplorrhini</taxon>
        <taxon>Catarrhini</taxon>
        <taxon>Hominidae</taxon>
        <taxon>Homo</taxon>
    </lineage>
</organism>
<proteinExistence type="uncertain"/>
<protein>
    <recommendedName>
        <fullName>Putative Dresden prostate carcinoma protein 2</fullName>
        <shortName>D-PCa-2</shortName>
    </recommendedName>
    <alternativeName>
        <fullName>High mobility group nucleosome-binding domain-containing protein 2 pseudogene 46</fullName>
    </alternativeName>
</protein>
<keyword id="KW-0025">Alternative splicing</keyword>
<keyword id="KW-1185">Reference proteome</keyword>
<dbReference type="EMBL" id="AY271964">
    <property type="protein sequence ID" value="AAP12643.1"/>
    <property type="molecule type" value="mRNA"/>
</dbReference>
<dbReference type="EMBL" id="AY271965">
    <property type="protein sequence ID" value="AAP12644.1"/>
    <property type="molecule type" value="mRNA"/>
</dbReference>
<dbReference type="EMBL" id="AY271966">
    <property type="protein sequence ID" value="AAP12645.1"/>
    <property type="molecule type" value="mRNA"/>
</dbReference>
<dbReference type="EMBL" id="AY271967">
    <property type="protein sequence ID" value="AAP12646.1"/>
    <property type="molecule type" value="mRNA"/>
</dbReference>
<dbReference type="EMBL" id="AK096745">
    <property type="protein sequence ID" value="BAC04856.1"/>
    <property type="molecule type" value="mRNA"/>
</dbReference>
<dbReference type="EMBL" id="AC025580">
    <property type="status" value="NOT_ANNOTATED_CDS"/>
    <property type="molecule type" value="Genomic_DNA"/>
</dbReference>
<dbReference type="FunCoup" id="Q86SG4">
    <property type="interactions" value="55"/>
</dbReference>
<dbReference type="IntAct" id="Q86SG4">
    <property type="interactions" value="3"/>
</dbReference>
<dbReference type="MINT" id="Q86SG4"/>
<dbReference type="BioMuta" id="HGNC:26817"/>
<dbReference type="AGR" id="HGNC:26817"/>
<dbReference type="GeneCards" id="HMGN2P46"/>
<dbReference type="HGNC" id="HGNC:26817">
    <property type="gene designation" value="HMGN2P46"/>
</dbReference>
<dbReference type="MIM" id="611314">
    <property type="type" value="gene"/>
</dbReference>
<dbReference type="neXtProt" id="NX_Q86SG4"/>
<dbReference type="InParanoid" id="Q86SG4"/>
<dbReference type="PAN-GO" id="Q86SG4">
    <property type="GO annotations" value="3 GO annotations based on evolutionary models"/>
</dbReference>
<dbReference type="PhylomeDB" id="Q86SG4"/>
<dbReference type="PathwayCommons" id="Q86SG4"/>
<dbReference type="ChiTaRS" id="HMGN2P46">
    <property type="organism name" value="human"/>
</dbReference>
<dbReference type="Pharos" id="Q86SG4">
    <property type="development level" value="Tdark"/>
</dbReference>
<dbReference type="Proteomes" id="UP000005640">
    <property type="component" value="Unplaced"/>
</dbReference>
<dbReference type="RNAct" id="Q86SG4">
    <property type="molecule type" value="protein"/>
</dbReference>
<dbReference type="GO" id="GO:0005634">
    <property type="term" value="C:nucleus"/>
    <property type="evidence" value="ECO:0000318"/>
    <property type="project" value="GO_Central"/>
</dbReference>
<dbReference type="GO" id="GO:0003682">
    <property type="term" value="F:chromatin binding"/>
    <property type="evidence" value="ECO:0000318"/>
    <property type="project" value="GO_Central"/>
</dbReference>
<dbReference type="GO" id="GO:0006325">
    <property type="term" value="P:chromatin organization"/>
    <property type="evidence" value="ECO:0000318"/>
    <property type="project" value="GO_Central"/>
</dbReference>
<comment type="alternative products">
    <event type="alternative splicing"/>
    <isoform>
        <id>Q86SG4-1</id>
        <name>1</name>
        <sequence type="displayed"/>
    </isoform>
    <isoform>
        <id>Q86SG4-2</id>
        <name>2</name>
        <sequence type="described" ref="VSP_014625"/>
    </isoform>
    <isoform>
        <id>Q86SG4-3</id>
        <name>3</name>
        <sequence type="described" ref="VSP_014624"/>
    </isoform>
</comment>
<comment type="tissue specificity">
    <text evidence="2">Very high expression in prostate and prostate cancer. Faint expression in other tissues.</text>
</comment>
<comment type="caution">
    <text evidence="5">Could be the product of a pseudogene.</text>
</comment>
<name>DPCA2_HUMAN</name>